<proteinExistence type="inferred from homology"/>
<keyword id="KW-0032">Aminotransferase</keyword>
<keyword id="KW-1185">Reference proteome</keyword>
<keyword id="KW-0808">Transferase</keyword>
<feature type="chain" id="PRO_1000204643" description="Probable aminomethyltransferase">
    <location>
        <begin position="1"/>
        <end position="398"/>
    </location>
</feature>
<protein>
    <recommendedName>
        <fullName evidence="1">Probable aminomethyltransferase</fullName>
        <ecNumber evidence="1">2.1.2.10</ecNumber>
    </recommendedName>
    <alternativeName>
        <fullName evidence="1">Glycine cleavage system T protein</fullName>
    </alternativeName>
</protein>
<name>GCST_THEGJ</name>
<evidence type="ECO:0000255" key="1">
    <source>
        <dbReference type="HAMAP-Rule" id="MF_00259"/>
    </source>
</evidence>
<comment type="function">
    <text evidence="1">The glycine cleavage system catalyzes the degradation of glycine.</text>
</comment>
<comment type="catalytic activity">
    <reaction evidence="1">
        <text>N(6)-[(R)-S(8)-aminomethyldihydrolipoyl]-L-lysyl-[protein] + (6S)-5,6,7,8-tetrahydrofolate = N(6)-[(R)-dihydrolipoyl]-L-lysyl-[protein] + (6R)-5,10-methylene-5,6,7,8-tetrahydrofolate + NH4(+)</text>
        <dbReference type="Rhea" id="RHEA:16945"/>
        <dbReference type="Rhea" id="RHEA-COMP:10475"/>
        <dbReference type="Rhea" id="RHEA-COMP:10492"/>
        <dbReference type="ChEBI" id="CHEBI:15636"/>
        <dbReference type="ChEBI" id="CHEBI:28938"/>
        <dbReference type="ChEBI" id="CHEBI:57453"/>
        <dbReference type="ChEBI" id="CHEBI:83100"/>
        <dbReference type="ChEBI" id="CHEBI:83143"/>
        <dbReference type="EC" id="2.1.2.10"/>
    </reaction>
</comment>
<comment type="subunit">
    <text evidence="1">The glycine cleavage system is composed of four proteins: P, T, L and H.</text>
</comment>
<comment type="similarity">
    <text evidence="1">Belongs to the GcvT family.</text>
</comment>
<sequence>MVKRVHIFDWHKEHAKKVEEFAGWEMPIWYSSIKEEHLAVRNGVGIFDVSHMGEFIFRGKDALEFLQYVTTNDISKPPAISGTYTLVLNERGAVKDETLVFNLGNDTYMMVCDSDAFEKLEAWFNAIKRGIEKFGSIDLEIENKTYDMAMFSVQGPKARDLAKDLFGIDINDLWWFQAKEVELDGIKMLLSRSGYTGENGWEVYFEDKNPYHPNPEKRGRPEKALHVWERILEEGEKYGIKPAGLGARDTLRLEAGYTLYGNETKELQLLSTDIDEVTPLQANLDFAIFWDKEFIGKEALLKQKERGLGRKMVHFKMVDRGIPREGYKVLANGEVIGEVTSGTLSPLLGIGIGIAFVKEEYAKPGLEIEVEIRGKPKRAVTVSPPFYDPKKYGAFREE</sequence>
<dbReference type="EC" id="2.1.2.10" evidence="1"/>
<dbReference type="EMBL" id="CP001398">
    <property type="protein sequence ID" value="ACS32852.1"/>
    <property type="molecule type" value="Genomic_DNA"/>
</dbReference>
<dbReference type="RefSeq" id="WP_015857970.1">
    <property type="nucleotide sequence ID" value="NC_012804.1"/>
</dbReference>
<dbReference type="SMR" id="C5A3P0"/>
<dbReference type="STRING" id="593117.TGAM_0350"/>
<dbReference type="PaxDb" id="593117-TGAM_0350"/>
<dbReference type="GeneID" id="7987816"/>
<dbReference type="KEGG" id="tga:TGAM_0350"/>
<dbReference type="PATRIC" id="fig|593117.10.peg.348"/>
<dbReference type="eggNOG" id="arCOG00756">
    <property type="taxonomic scope" value="Archaea"/>
</dbReference>
<dbReference type="HOGENOM" id="CLU_007884_10_2_2"/>
<dbReference type="OrthoDB" id="2001at2157"/>
<dbReference type="Proteomes" id="UP000001488">
    <property type="component" value="Chromosome"/>
</dbReference>
<dbReference type="GO" id="GO:0005960">
    <property type="term" value="C:glycine cleavage complex"/>
    <property type="evidence" value="ECO:0007669"/>
    <property type="project" value="InterPro"/>
</dbReference>
<dbReference type="GO" id="GO:0004047">
    <property type="term" value="F:aminomethyltransferase activity"/>
    <property type="evidence" value="ECO:0007669"/>
    <property type="project" value="UniProtKB-UniRule"/>
</dbReference>
<dbReference type="GO" id="GO:0008483">
    <property type="term" value="F:transaminase activity"/>
    <property type="evidence" value="ECO:0007669"/>
    <property type="project" value="UniProtKB-KW"/>
</dbReference>
<dbReference type="GO" id="GO:0019464">
    <property type="term" value="P:glycine decarboxylation via glycine cleavage system"/>
    <property type="evidence" value="ECO:0007669"/>
    <property type="project" value="UniProtKB-UniRule"/>
</dbReference>
<dbReference type="FunFam" id="2.40.30.110:FF:000003">
    <property type="entry name" value="Aminomethyltransferase"/>
    <property type="match status" value="1"/>
</dbReference>
<dbReference type="Gene3D" id="2.40.30.110">
    <property type="entry name" value="Aminomethyltransferase beta-barrel domains"/>
    <property type="match status" value="1"/>
</dbReference>
<dbReference type="Gene3D" id="3.30.70.1400">
    <property type="entry name" value="Aminomethyltransferase beta-barrel domains"/>
    <property type="match status" value="1"/>
</dbReference>
<dbReference type="Gene3D" id="4.10.1250.10">
    <property type="entry name" value="Aminomethyltransferase fragment"/>
    <property type="match status" value="1"/>
</dbReference>
<dbReference type="Gene3D" id="3.30.1360.120">
    <property type="entry name" value="Probable tRNA modification gtpase trme, domain 1"/>
    <property type="match status" value="1"/>
</dbReference>
<dbReference type="HAMAP" id="MF_00259">
    <property type="entry name" value="GcvT"/>
    <property type="match status" value="1"/>
</dbReference>
<dbReference type="InterPro" id="IPR006223">
    <property type="entry name" value="GCS_T"/>
</dbReference>
<dbReference type="InterPro" id="IPR022903">
    <property type="entry name" value="GCS_T_bac"/>
</dbReference>
<dbReference type="InterPro" id="IPR013977">
    <property type="entry name" value="GCST_C"/>
</dbReference>
<dbReference type="InterPro" id="IPR006222">
    <property type="entry name" value="GCV_T_N"/>
</dbReference>
<dbReference type="InterPro" id="IPR028896">
    <property type="entry name" value="GcvT/YgfZ/DmdA"/>
</dbReference>
<dbReference type="InterPro" id="IPR029043">
    <property type="entry name" value="GcvT/YgfZ_C"/>
</dbReference>
<dbReference type="InterPro" id="IPR027266">
    <property type="entry name" value="TrmE/GcvT_dom1"/>
</dbReference>
<dbReference type="NCBIfam" id="TIGR00528">
    <property type="entry name" value="gcvT"/>
    <property type="match status" value="1"/>
</dbReference>
<dbReference type="NCBIfam" id="NF001567">
    <property type="entry name" value="PRK00389.1"/>
    <property type="match status" value="1"/>
</dbReference>
<dbReference type="PANTHER" id="PTHR43757">
    <property type="entry name" value="AMINOMETHYLTRANSFERASE"/>
    <property type="match status" value="1"/>
</dbReference>
<dbReference type="PANTHER" id="PTHR43757:SF2">
    <property type="entry name" value="AMINOMETHYLTRANSFERASE, MITOCHONDRIAL"/>
    <property type="match status" value="1"/>
</dbReference>
<dbReference type="Pfam" id="PF01571">
    <property type="entry name" value="GCV_T"/>
    <property type="match status" value="1"/>
</dbReference>
<dbReference type="Pfam" id="PF08669">
    <property type="entry name" value="GCV_T_C"/>
    <property type="match status" value="1"/>
</dbReference>
<dbReference type="PIRSF" id="PIRSF006487">
    <property type="entry name" value="GcvT"/>
    <property type="match status" value="1"/>
</dbReference>
<dbReference type="SUPFAM" id="SSF101790">
    <property type="entry name" value="Aminomethyltransferase beta-barrel domain"/>
    <property type="match status" value="1"/>
</dbReference>
<dbReference type="SUPFAM" id="SSF103025">
    <property type="entry name" value="Folate-binding domain"/>
    <property type="match status" value="1"/>
</dbReference>
<reference key="1">
    <citation type="journal article" date="2007" name="Genome Biol.">
        <title>Genome analysis and genome-wide proteomics of Thermococcus gammatolerans, the most radioresistant organism known amongst the Archaea.</title>
        <authorList>
            <person name="Zivanovic Y."/>
            <person name="Armengaud J."/>
            <person name="Lagorce A."/>
            <person name="Leplat C."/>
            <person name="Guerin P."/>
            <person name="Dutertre M."/>
            <person name="Anthouard V."/>
            <person name="Forterre P."/>
            <person name="Wincker P."/>
            <person name="Confalonieri F."/>
        </authorList>
    </citation>
    <scope>NUCLEOTIDE SEQUENCE [LARGE SCALE GENOMIC DNA]</scope>
    <source>
        <strain>DSM 15229 / JCM 11827 / EJ3</strain>
    </source>
</reference>
<gene>
    <name evidence="1" type="primary">gcvT</name>
    <name type="ordered locus">TGAM_0350</name>
</gene>
<accession>C5A3P0</accession>
<organism>
    <name type="scientific">Thermococcus gammatolerans (strain DSM 15229 / JCM 11827 / EJ3)</name>
    <dbReference type="NCBI Taxonomy" id="593117"/>
    <lineage>
        <taxon>Archaea</taxon>
        <taxon>Methanobacteriati</taxon>
        <taxon>Methanobacteriota</taxon>
        <taxon>Thermococci</taxon>
        <taxon>Thermococcales</taxon>
        <taxon>Thermococcaceae</taxon>
        <taxon>Thermococcus</taxon>
    </lineage>
</organism>